<accession>B7IXL3</accession>
<name>GCSPA_BACC2</name>
<gene>
    <name evidence="1" type="primary">gcvPA</name>
    <name type="ordered locus">BCG9842_B0902</name>
</gene>
<organism>
    <name type="scientific">Bacillus cereus (strain G9842)</name>
    <dbReference type="NCBI Taxonomy" id="405531"/>
    <lineage>
        <taxon>Bacteria</taxon>
        <taxon>Bacillati</taxon>
        <taxon>Bacillota</taxon>
        <taxon>Bacilli</taxon>
        <taxon>Bacillales</taxon>
        <taxon>Bacillaceae</taxon>
        <taxon>Bacillus</taxon>
        <taxon>Bacillus cereus group</taxon>
    </lineage>
</organism>
<sequence length="447" mass="49398">MLHRYLPMTEEDKKEMLQTIGVQTIDELFSDIPESVRFKGDLKIKEAKSEPELLKELSQMASKNANLKEYASFLGAGVYDHYAPVIVDHVISRSEFYTAYTPYQPEISQGELQAIFEFQTMICELTGMDVANSSMYDGGTALAEAAMLAAGHTRKKKILVSSAVHPESRAVLETYAKGQNLEVVEINHKDGVTDLDVLQSEVDDTVACVIVQYPNFFGQVEKLADIEKIVHQQKSLFIVSSNPLSLGALTPPGKFGADIVIGDAQPFGIPTQFGGPHCGYFATTKAFMRKIPGRLVGQTVDSDGKRGFVLTLQAREQHIRRDKATSNICSNQALNALAASVAMTALGKQGVKEMARQNISKAQYAKRQFEAKGFTVTFAGPFFNEFVVDCKRPVKEVNDALLQKNIIGGYDLGRDYKEHENHMLVAVTELRTKEEIDTLVNEMGAIQ</sequence>
<reference key="1">
    <citation type="submission" date="2008-10" db="EMBL/GenBank/DDBJ databases">
        <title>Genome sequence of Bacillus cereus G9842.</title>
        <authorList>
            <person name="Dodson R.J."/>
            <person name="Durkin A.S."/>
            <person name="Rosovitz M.J."/>
            <person name="Rasko D.A."/>
            <person name="Hoffmaster A."/>
            <person name="Ravel J."/>
            <person name="Sutton G."/>
        </authorList>
    </citation>
    <scope>NUCLEOTIDE SEQUENCE [LARGE SCALE GENOMIC DNA]</scope>
    <source>
        <strain>G9842</strain>
    </source>
</reference>
<comment type="function">
    <text evidence="1">The glycine cleavage system catalyzes the degradation of glycine. The P protein binds the alpha-amino group of glycine through its pyridoxal phosphate cofactor; CO(2) is released and the remaining methylamine moiety is then transferred to the lipoamide cofactor of the H protein.</text>
</comment>
<comment type="catalytic activity">
    <reaction evidence="1">
        <text>N(6)-[(R)-lipoyl]-L-lysyl-[glycine-cleavage complex H protein] + glycine + H(+) = N(6)-[(R)-S(8)-aminomethyldihydrolipoyl]-L-lysyl-[glycine-cleavage complex H protein] + CO2</text>
        <dbReference type="Rhea" id="RHEA:24304"/>
        <dbReference type="Rhea" id="RHEA-COMP:10494"/>
        <dbReference type="Rhea" id="RHEA-COMP:10495"/>
        <dbReference type="ChEBI" id="CHEBI:15378"/>
        <dbReference type="ChEBI" id="CHEBI:16526"/>
        <dbReference type="ChEBI" id="CHEBI:57305"/>
        <dbReference type="ChEBI" id="CHEBI:83099"/>
        <dbReference type="ChEBI" id="CHEBI:83143"/>
        <dbReference type="EC" id="1.4.4.2"/>
    </reaction>
</comment>
<comment type="subunit">
    <text evidence="1">The glycine cleavage system is composed of four proteins: P, T, L and H. In this organism, the P 'protein' is a heterodimer of two subunits.</text>
</comment>
<comment type="similarity">
    <text evidence="1">Belongs to the GcvP family. N-terminal subunit subfamily.</text>
</comment>
<protein>
    <recommendedName>
        <fullName evidence="1">Probable glycine dehydrogenase (decarboxylating) subunit 1</fullName>
        <ecNumber evidence="1">1.4.4.2</ecNumber>
    </recommendedName>
    <alternativeName>
        <fullName evidence="1">Glycine cleavage system P-protein subunit 1</fullName>
    </alternativeName>
    <alternativeName>
        <fullName evidence="1">Glycine decarboxylase subunit 1</fullName>
    </alternativeName>
    <alternativeName>
        <fullName evidence="1">Glycine dehydrogenase (aminomethyl-transferring) subunit 1</fullName>
    </alternativeName>
</protein>
<keyword id="KW-0560">Oxidoreductase</keyword>
<proteinExistence type="inferred from homology"/>
<dbReference type="EC" id="1.4.4.2" evidence="1"/>
<dbReference type="EMBL" id="CP001186">
    <property type="protein sequence ID" value="ACK95300.1"/>
    <property type="molecule type" value="Genomic_DNA"/>
</dbReference>
<dbReference type="RefSeq" id="WP_000903240.1">
    <property type="nucleotide sequence ID" value="NC_011772.1"/>
</dbReference>
<dbReference type="SMR" id="B7IXL3"/>
<dbReference type="GeneID" id="72450911"/>
<dbReference type="KEGG" id="bcg:BCG9842_B0902"/>
<dbReference type="HOGENOM" id="CLU_004620_0_2_9"/>
<dbReference type="Proteomes" id="UP000006744">
    <property type="component" value="Chromosome"/>
</dbReference>
<dbReference type="GO" id="GO:0004375">
    <property type="term" value="F:glycine dehydrogenase (decarboxylating) activity"/>
    <property type="evidence" value="ECO:0007669"/>
    <property type="project" value="UniProtKB-EC"/>
</dbReference>
<dbReference type="GO" id="GO:0019464">
    <property type="term" value="P:glycine decarboxylation via glycine cleavage system"/>
    <property type="evidence" value="ECO:0007669"/>
    <property type="project" value="UniProtKB-UniRule"/>
</dbReference>
<dbReference type="GO" id="GO:0009116">
    <property type="term" value="P:nucleoside metabolic process"/>
    <property type="evidence" value="ECO:0007669"/>
    <property type="project" value="InterPro"/>
</dbReference>
<dbReference type="CDD" id="cd00613">
    <property type="entry name" value="GDC-P"/>
    <property type="match status" value="1"/>
</dbReference>
<dbReference type="FunFam" id="3.40.640.10:FF:000113">
    <property type="entry name" value="Probable glycine dehydrogenase (decarboxylating) subunit 1"/>
    <property type="match status" value="1"/>
</dbReference>
<dbReference type="Gene3D" id="3.90.1150.10">
    <property type="entry name" value="Aspartate Aminotransferase, domain 1"/>
    <property type="match status" value="1"/>
</dbReference>
<dbReference type="Gene3D" id="3.40.640.10">
    <property type="entry name" value="Type I PLP-dependent aspartate aminotransferase-like (Major domain)"/>
    <property type="match status" value="1"/>
</dbReference>
<dbReference type="HAMAP" id="MF_00712">
    <property type="entry name" value="GcvPA"/>
    <property type="match status" value="1"/>
</dbReference>
<dbReference type="InterPro" id="IPR023010">
    <property type="entry name" value="GcvPA"/>
</dbReference>
<dbReference type="InterPro" id="IPR049315">
    <property type="entry name" value="GDC-P_N"/>
</dbReference>
<dbReference type="InterPro" id="IPR020581">
    <property type="entry name" value="GDC_P"/>
</dbReference>
<dbReference type="InterPro" id="IPR015424">
    <property type="entry name" value="PyrdxlP-dep_Trfase"/>
</dbReference>
<dbReference type="InterPro" id="IPR015421">
    <property type="entry name" value="PyrdxlP-dep_Trfase_major"/>
</dbReference>
<dbReference type="InterPro" id="IPR015422">
    <property type="entry name" value="PyrdxlP-dep_Trfase_small"/>
</dbReference>
<dbReference type="NCBIfam" id="NF001696">
    <property type="entry name" value="PRK00451.1"/>
    <property type="match status" value="1"/>
</dbReference>
<dbReference type="PANTHER" id="PTHR42806">
    <property type="entry name" value="GLYCINE CLEAVAGE SYSTEM P-PROTEIN"/>
    <property type="match status" value="1"/>
</dbReference>
<dbReference type="PANTHER" id="PTHR42806:SF1">
    <property type="entry name" value="GLYCINE DEHYDROGENASE (DECARBOXYLATING)"/>
    <property type="match status" value="1"/>
</dbReference>
<dbReference type="Pfam" id="PF02347">
    <property type="entry name" value="GDC-P"/>
    <property type="match status" value="1"/>
</dbReference>
<dbReference type="PIRSF" id="PIRSF006815">
    <property type="entry name" value="GcvPA"/>
    <property type="match status" value="1"/>
</dbReference>
<dbReference type="SUPFAM" id="SSF53383">
    <property type="entry name" value="PLP-dependent transferases"/>
    <property type="match status" value="1"/>
</dbReference>
<evidence type="ECO:0000255" key="1">
    <source>
        <dbReference type="HAMAP-Rule" id="MF_00712"/>
    </source>
</evidence>
<feature type="chain" id="PRO_1000132468" description="Probable glycine dehydrogenase (decarboxylating) subunit 1">
    <location>
        <begin position="1"/>
        <end position="447"/>
    </location>
</feature>